<evidence type="ECO:0000250" key="1"/>
<evidence type="ECO:0000250" key="2">
    <source>
        <dbReference type="UniProtKB" id="P0C0S5"/>
    </source>
</evidence>
<evidence type="ECO:0000250" key="3">
    <source>
        <dbReference type="UniProtKB" id="Q8R1M2"/>
    </source>
</evidence>
<evidence type="ECO:0000256" key="4">
    <source>
        <dbReference type="SAM" id="MobiDB-lite"/>
    </source>
</evidence>
<evidence type="ECO:0000303" key="5">
    <source>
    </source>
</evidence>
<evidence type="ECO:0000305" key="6"/>
<evidence type="ECO:0000312" key="7">
    <source>
        <dbReference type="HGNC" id="HGNC:14456"/>
    </source>
</evidence>
<evidence type="ECO:0007829" key="8">
    <source>
        <dbReference type="PDB" id="6KVD"/>
    </source>
</evidence>
<accession>Q9BTM1</accession>
<accession>Q9NV63</accession>
<comment type="function">
    <text>Core component of nucleosome. Nucleosomes wrap and compact DNA into chromatin, limiting DNA accessibility to the cellular machineries which require DNA as a template. Histones thereby play a central role in transcription regulation, DNA repair, DNA replication and chromosomal stability. DNA accessibility is regulated via a complex set of post-translational modifications of histones, also called histone code, and nucleosome remodeling.</text>
</comment>
<comment type="subunit">
    <text>The nucleosome is a histone octamer containing two molecules each of H2A, H2B, H3 and H4 assembled in one H3-H4 heterotetramer and two H2A-H2B heterodimers. The octamer wraps approximately 147 bp of DNA.</text>
</comment>
<comment type="subcellular location">
    <subcellularLocation>
        <location evidence="1">Nucleus</location>
    </subcellularLocation>
    <subcellularLocation>
        <location evidence="1">Chromosome</location>
    </subcellularLocation>
</comment>
<comment type="alternative products">
    <event type="alternative splicing"/>
    <isoform>
        <id>Q9BTM1-1</id>
        <name>1</name>
        <sequence type="displayed"/>
    </isoform>
    <isoform>
        <id>Q9BTM1-2</id>
        <name>2</name>
        <sequence type="described" ref="VSP_034750"/>
    </isoform>
</comment>
<comment type="PTM">
    <text evidence="1">Monoubiquitination of Lys-120 (H2AXK119ub) gives a specific tag for epigenetic transcriptional repression. Following DNA double-strand breaks (DSBs), it is ubiquitinated through 'Lys-63' linkage of ubiquitin moieties (By similarity).</text>
</comment>
<comment type="PTM">
    <text evidence="1">Phosphorylation on Ser-2 (H2AS1ph) is enhanced during mitosis. Phosphorylation on Ser-2 by RPS6KA5/MSK1 directly represses transcription. Acetylation of H3 inhibits Ser-2 phosphorylation by RPS6KA5/MSK1. Phosphorylation at Thr-121 (H2AT120ph) by DCAF1 is present in the regulatory region of many tumor suppresor genes and down-regulates their transcription (By similarity).</text>
</comment>
<comment type="PTM">
    <text evidence="1">Glutamine methylation at Gln-105 (H2AQ104me) by FBL is specifically dedicated to polymerase I. It is present at 35S ribosomal DNA locus and impairs binding of the FACT complex (By similarity).</text>
</comment>
<comment type="similarity">
    <text evidence="6">Belongs to the histone H2A family.</text>
</comment>
<reference key="1">
    <citation type="journal article" date="2004" name="Nat. Genet.">
        <title>Complete sequencing and characterization of 21,243 full-length human cDNAs.</title>
        <authorList>
            <person name="Ota T."/>
            <person name="Suzuki Y."/>
            <person name="Nishikawa T."/>
            <person name="Otsuki T."/>
            <person name="Sugiyama T."/>
            <person name="Irie R."/>
            <person name="Wakamatsu A."/>
            <person name="Hayashi K."/>
            <person name="Sato H."/>
            <person name="Nagai K."/>
            <person name="Kimura K."/>
            <person name="Makita H."/>
            <person name="Sekine M."/>
            <person name="Obayashi M."/>
            <person name="Nishi T."/>
            <person name="Shibahara T."/>
            <person name="Tanaka T."/>
            <person name="Ishii S."/>
            <person name="Yamamoto J."/>
            <person name="Saito K."/>
            <person name="Kawai Y."/>
            <person name="Isono Y."/>
            <person name="Nakamura Y."/>
            <person name="Nagahari K."/>
            <person name="Murakami K."/>
            <person name="Yasuda T."/>
            <person name="Iwayanagi T."/>
            <person name="Wagatsuma M."/>
            <person name="Shiratori A."/>
            <person name="Sudo H."/>
            <person name="Hosoiri T."/>
            <person name="Kaku Y."/>
            <person name="Kodaira H."/>
            <person name="Kondo H."/>
            <person name="Sugawara M."/>
            <person name="Takahashi M."/>
            <person name="Kanda K."/>
            <person name="Yokoi T."/>
            <person name="Furuya T."/>
            <person name="Kikkawa E."/>
            <person name="Omura Y."/>
            <person name="Abe K."/>
            <person name="Kamihara K."/>
            <person name="Katsuta N."/>
            <person name="Sato K."/>
            <person name="Tanikawa M."/>
            <person name="Yamazaki M."/>
            <person name="Ninomiya K."/>
            <person name="Ishibashi T."/>
            <person name="Yamashita H."/>
            <person name="Murakawa K."/>
            <person name="Fujimori K."/>
            <person name="Tanai H."/>
            <person name="Kimata M."/>
            <person name="Watanabe M."/>
            <person name="Hiraoka S."/>
            <person name="Chiba Y."/>
            <person name="Ishida S."/>
            <person name="Ono Y."/>
            <person name="Takiguchi S."/>
            <person name="Watanabe S."/>
            <person name="Yosida M."/>
            <person name="Hotuta T."/>
            <person name="Kusano J."/>
            <person name="Kanehori K."/>
            <person name="Takahashi-Fujii A."/>
            <person name="Hara H."/>
            <person name="Tanase T.-O."/>
            <person name="Nomura Y."/>
            <person name="Togiya S."/>
            <person name="Komai F."/>
            <person name="Hara R."/>
            <person name="Takeuchi K."/>
            <person name="Arita M."/>
            <person name="Imose N."/>
            <person name="Musashino K."/>
            <person name="Yuuki H."/>
            <person name="Oshima A."/>
            <person name="Sasaki N."/>
            <person name="Aotsuka S."/>
            <person name="Yoshikawa Y."/>
            <person name="Matsunawa H."/>
            <person name="Ichihara T."/>
            <person name="Shiohata N."/>
            <person name="Sano S."/>
            <person name="Moriya S."/>
            <person name="Momiyama H."/>
            <person name="Satoh N."/>
            <person name="Takami S."/>
            <person name="Terashima Y."/>
            <person name="Suzuki O."/>
            <person name="Nakagawa S."/>
            <person name="Senoh A."/>
            <person name="Mizoguchi H."/>
            <person name="Goto Y."/>
            <person name="Shimizu F."/>
            <person name="Wakebe H."/>
            <person name="Hishigaki H."/>
            <person name="Watanabe T."/>
            <person name="Sugiyama A."/>
            <person name="Takemoto M."/>
            <person name="Kawakami B."/>
            <person name="Yamazaki M."/>
            <person name="Watanabe K."/>
            <person name="Kumagai A."/>
            <person name="Itakura S."/>
            <person name="Fukuzumi Y."/>
            <person name="Fujimori Y."/>
            <person name="Komiyama M."/>
            <person name="Tashiro H."/>
            <person name="Tanigami A."/>
            <person name="Fujiwara T."/>
            <person name="Ono T."/>
            <person name="Yamada K."/>
            <person name="Fujii Y."/>
            <person name="Ozaki K."/>
            <person name="Hirao M."/>
            <person name="Ohmori Y."/>
            <person name="Kawabata A."/>
            <person name="Hikiji T."/>
            <person name="Kobatake N."/>
            <person name="Inagaki H."/>
            <person name="Ikema Y."/>
            <person name="Okamoto S."/>
            <person name="Okitani R."/>
            <person name="Kawakami T."/>
            <person name="Noguchi S."/>
            <person name="Itoh T."/>
            <person name="Shigeta K."/>
            <person name="Senba T."/>
            <person name="Matsumura K."/>
            <person name="Nakajima Y."/>
            <person name="Mizuno T."/>
            <person name="Morinaga M."/>
            <person name="Sasaki M."/>
            <person name="Togashi T."/>
            <person name="Oyama M."/>
            <person name="Hata H."/>
            <person name="Watanabe M."/>
            <person name="Komatsu T."/>
            <person name="Mizushima-Sugano J."/>
            <person name="Satoh T."/>
            <person name="Shirai Y."/>
            <person name="Takahashi Y."/>
            <person name="Nakagawa K."/>
            <person name="Okumura K."/>
            <person name="Nagase T."/>
            <person name="Nomura N."/>
            <person name="Kikuchi H."/>
            <person name="Masuho Y."/>
            <person name="Yamashita R."/>
            <person name="Nakai K."/>
            <person name="Yada T."/>
            <person name="Nakamura Y."/>
            <person name="Ohara O."/>
            <person name="Isogai T."/>
            <person name="Sugano S."/>
        </authorList>
    </citation>
    <scope>NUCLEOTIDE SEQUENCE [LARGE SCALE MRNA] (ISOFORM 2)</scope>
    <source>
        <tissue>Ovarian carcinoma</tissue>
    </source>
</reference>
<reference key="2">
    <citation type="submission" date="2005-07" db="EMBL/GenBank/DDBJ databases">
        <authorList>
            <person name="Mural R.J."/>
            <person name="Istrail S."/>
            <person name="Sutton G.G."/>
            <person name="Florea L."/>
            <person name="Halpern A.L."/>
            <person name="Mobarry C.M."/>
            <person name="Lippert R."/>
            <person name="Walenz B."/>
            <person name="Shatkay H."/>
            <person name="Dew I."/>
            <person name="Miller J.R."/>
            <person name="Flanigan M.J."/>
            <person name="Edwards N.J."/>
            <person name="Bolanos R."/>
            <person name="Fasulo D."/>
            <person name="Halldorsson B.V."/>
            <person name="Hannenhalli S."/>
            <person name="Turner R."/>
            <person name="Yooseph S."/>
            <person name="Lu F."/>
            <person name="Nusskern D.R."/>
            <person name="Shue B.C."/>
            <person name="Zheng X.H."/>
            <person name="Zhong F."/>
            <person name="Delcher A.L."/>
            <person name="Huson D.H."/>
            <person name="Kravitz S.A."/>
            <person name="Mouchard L."/>
            <person name="Reinert K."/>
            <person name="Remington K.A."/>
            <person name="Clark A.G."/>
            <person name="Waterman M.S."/>
            <person name="Eichler E.E."/>
            <person name="Adams M.D."/>
            <person name="Hunkapiller M.W."/>
            <person name="Myers E.W."/>
            <person name="Venter J.C."/>
        </authorList>
    </citation>
    <scope>NUCLEOTIDE SEQUENCE [LARGE SCALE GENOMIC DNA]</scope>
</reference>
<reference key="3">
    <citation type="journal article" date="2004" name="Genome Res.">
        <title>The status, quality, and expansion of the NIH full-length cDNA project: the Mammalian Gene Collection (MGC).</title>
        <authorList>
            <consortium name="The MGC Project Team"/>
        </authorList>
    </citation>
    <scope>NUCLEOTIDE SEQUENCE [LARGE SCALE MRNA] (ISOFORM 1)</scope>
    <source>
        <tissue>Eye</tissue>
    </source>
</reference>
<feature type="initiator methionine" description="Removed" evidence="6">
    <location>
        <position position="1"/>
    </location>
</feature>
<feature type="chain" id="PRO_0000344247" description="Histone H2A.J">
    <location>
        <begin position="2"/>
        <end position="129"/>
    </location>
</feature>
<feature type="region of interest" description="Disordered" evidence="4">
    <location>
        <begin position="1"/>
        <end position="22"/>
    </location>
</feature>
<feature type="compositionally biased region" description="Basic residues" evidence="4">
    <location>
        <begin position="7"/>
        <end position="19"/>
    </location>
</feature>
<feature type="modified residue" description="N6-acetyllysine" evidence="3">
    <location>
        <position position="6"/>
    </location>
</feature>
<feature type="modified residue" description="N6-acetyllysine" evidence="3">
    <location>
        <position position="10"/>
    </location>
</feature>
<feature type="modified residue" description="N6-lactoyllysine; alternate" evidence="2">
    <location>
        <position position="10"/>
    </location>
</feature>
<feature type="modified residue" description="N5-methylglutamine" evidence="1">
    <location>
        <position position="105"/>
    </location>
</feature>
<feature type="modified residue" description="Phosphothreonine; by DCAF1" evidence="1">
    <location>
        <position position="121"/>
    </location>
</feature>
<feature type="splice variant" id="VSP_034750" description="In isoform 2." evidence="5">
    <original>KKTESQKTKSK</original>
    <variation>VCEHSGPSSGKIPSDRAELGAGSVCGHIFQKVE</variation>
    <location>
        <begin position="119"/>
        <end position="129"/>
    </location>
</feature>
<feature type="helix" evidence="8">
    <location>
        <begin position="18"/>
        <end position="22"/>
    </location>
</feature>
<feature type="helix" evidence="8">
    <location>
        <begin position="28"/>
        <end position="37"/>
    </location>
</feature>
<feature type="strand" evidence="8">
    <location>
        <begin position="42"/>
        <end position="44"/>
    </location>
</feature>
<feature type="helix" evidence="8">
    <location>
        <begin position="48"/>
        <end position="73"/>
    </location>
</feature>
<feature type="strand" evidence="8">
    <location>
        <begin position="77"/>
        <end position="79"/>
    </location>
</feature>
<feature type="helix" evidence="8">
    <location>
        <begin position="81"/>
        <end position="89"/>
    </location>
</feature>
<feature type="helix" evidence="8">
    <location>
        <begin position="92"/>
        <end position="97"/>
    </location>
</feature>
<feature type="turn" evidence="8">
    <location>
        <begin position="98"/>
        <end position="100"/>
    </location>
</feature>
<feature type="strand" evidence="8">
    <location>
        <begin position="101"/>
        <end position="103"/>
    </location>
</feature>
<feature type="helix" evidence="8">
    <location>
        <begin position="114"/>
        <end position="116"/>
    </location>
</feature>
<proteinExistence type="evidence at protein level"/>
<organism>
    <name type="scientific">Homo sapiens</name>
    <name type="common">Human</name>
    <dbReference type="NCBI Taxonomy" id="9606"/>
    <lineage>
        <taxon>Eukaryota</taxon>
        <taxon>Metazoa</taxon>
        <taxon>Chordata</taxon>
        <taxon>Craniata</taxon>
        <taxon>Vertebrata</taxon>
        <taxon>Euteleostomi</taxon>
        <taxon>Mammalia</taxon>
        <taxon>Eutheria</taxon>
        <taxon>Euarchontoglires</taxon>
        <taxon>Primates</taxon>
        <taxon>Haplorrhini</taxon>
        <taxon>Catarrhini</taxon>
        <taxon>Hominidae</taxon>
        <taxon>Homo</taxon>
    </lineage>
</organism>
<sequence>MSGRGKQGGKVRAKAKSRSSRAGLQFPVGRVHRLLRKGNYAERVGAGAPVYLAAVLEYLTAEILELAGNAARDNKKTRIIPRHLQLAIRNDEELNKLLGKVTIAQGGVLPNIQAVLLPKKTESQKTKSK</sequence>
<protein>
    <recommendedName>
        <fullName>Histone H2A.J</fullName>
        <shortName>H2a/j</shortName>
    </recommendedName>
</protein>
<name>H2AJ_HUMAN</name>
<dbReference type="EMBL" id="AK001765">
    <property type="protein sequence ID" value="BAA91894.1"/>
    <property type="molecule type" value="mRNA"/>
</dbReference>
<dbReference type="EMBL" id="CH471094">
    <property type="protein sequence ID" value="EAW96326.1"/>
    <property type="molecule type" value="Genomic_DNA"/>
</dbReference>
<dbReference type="EMBL" id="BC003602">
    <property type="protein sequence ID" value="AAH03602.1"/>
    <property type="molecule type" value="mRNA"/>
</dbReference>
<dbReference type="CCDS" id="CCDS31752.1">
    <molecule id="Q9BTM1-1"/>
</dbReference>
<dbReference type="RefSeq" id="NP_808760.1">
    <molecule id="Q9BTM1-1"/>
    <property type="nucleotide sequence ID" value="NM_177925.5"/>
</dbReference>
<dbReference type="PDB" id="4EDU">
    <property type="method" value="X-ray"/>
    <property type="resolution" value="2.58 A"/>
    <property type="chains" value="T=31-46"/>
</dbReference>
<dbReference type="PDB" id="6K60">
    <property type="method" value="X-ray"/>
    <property type="resolution" value="3.15 A"/>
    <property type="chains" value="C/G=78-86"/>
</dbReference>
<dbReference type="PDB" id="6KVD">
    <property type="method" value="X-ray"/>
    <property type="resolution" value="2.21 A"/>
    <property type="chains" value="C/G=1-129"/>
</dbReference>
<dbReference type="PDB" id="7TRF">
    <property type="method" value="EM"/>
    <property type="resolution" value="3.70 A"/>
    <property type="chains" value="E=1-129"/>
</dbReference>
<dbReference type="PDBsum" id="4EDU"/>
<dbReference type="PDBsum" id="6K60"/>
<dbReference type="PDBsum" id="6KVD"/>
<dbReference type="PDBsum" id="7TRF"/>
<dbReference type="SMR" id="Q9BTM1"/>
<dbReference type="BioGRID" id="120884">
    <property type="interactions" value="267"/>
</dbReference>
<dbReference type="FunCoup" id="Q9BTM1">
    <property type="interactions" value="471"/>
</dbReference>
<dbReference type="IntAct" id="Q9BTM1">
    <property type="interactions" value="97"/>
</dbReference>
<dbReference type="MINT" id="Q9BTM1"/>
<dbReference type="STRING" id="9606.ENSP00000438553"/>
<dbReference type="GlyGen" id="Q9BTM1">
    <property type="glycosylation" value="1 site, 1 O-linked glycan (1 site)"/>
</dbReference>
<dbReference type="iPTMnet" id="Q9BTM1"/>
<dbReference type="PhosphoSitePlus" id="Q9BTM1"/>
<dbReference type="SwissPalm" id="Q9BTM1"/>
<dbReference type="BioMuta" id="H2AFJ"/>
<dbReference type="DMDM" id="74733131"/>
<dbReference type="jPOST" id="Q9BTM1"/>
<dbReference type="MassIVE" id="Q9BTM1"/>
<dbReference type="PaxDb" id="9606-ENSP00000438553"/>
<dbReference type="PeptideAtlas" id="Q9BTM1"/>
<dbReference type="PRIDE" id="Q9BTM1"/>
<dbReference type="ProteomicsDB" id="78997">
    <molecule id="Q9BTM1-1"/>
</dbReference>
<dbReference type="ProteomicsDB" id="78998">
    <molecule id="Q9BTM1-2"/>
</dbReference>
<dbReference type="Pumba" id="Q9BTM1"/>
<dbReference type="TopDownProteomics" id="Q9BTM1-1">
    <molecule id="Q9BTM1-1"/>
</dbReference>
<dbReference type="Antibodypedia" id="54929">
    <property type="antibodies" value="127 antibodies from 14 providers"/>
</dbReference>
<dbReference type="DNASU" id="55766"/>
<dbReference type="Ensembl" id="ENST00000389078.3">
    <molecule id="Q9BTM1-1"/>
    <property type="protein sequence ID" value="ENSP00000373730.3"/>
    <property type="gene ID" value="ENSG00000246705.5"/>
</dbReference>
<dbReference type="Ensembl" id="ENST00000544848.3">
    <molecule id="Q9BTM1-1"/>
    <property type="protein sequence ID" value="ENSP00000438553.1"/>
    <property type="gene ID" value="ENSG00000246705.5"/>
</dbReference>
<dbReference type="GeneID" id="55766"/>
<dbReference type="KEGG" id="hsa:55766"/>
<dbReference type="MANE-Select" id="ENST00000544848.3">
    <property type="protein sequence ID" value="ENSP00000438553.1"/>
    <property type="RefSeq nucleotide sequence ID" value="NM_177925.5"/>
    <property type="RefSeq protein sequence ID" value="NP_808760.1"/>
</dbReference>
<dbReference type="UCSC" id="uc009zia.4">
    <molecule id="Q9BTM1-1"/>
    <property type="organism name" value="human"/>
</dbReference>
<dbReference type="AGR" id="HGNC:14456"/>
<dbReference type="CTD" id="55766"/>
<dbReference type="DisGeNET" id="55766"/>
<dbReference type="GeneCards" id="H2AJ"/>
<dbReference type="HGNC" id="HGNC:14456">
    <property type="gene designation" value="H2AJ"/>
</dbReference>
<dbReference type="HPA" id="ENSG00000246705">
    <property type="expression patterns" value="Tissue enhanced (testis)"/>
</dbReference>
<dbReference type="neXtProt" id="NX_Q9BTM1"/>
<dbReference type="OpenTargets" id="ENSG00000246705"/>
<dbReference type="VEuPathDB" id="HostDB:ENSG00000246705"/>
<dbReference type="eggNOG" id="KOG1756">
    <property type="taxonomic scope" value="Eukaryota"/>
</dbReference>
<dbReference type="GeneTree" id="ENSGT00940000153118"/>
<dbReference type="HOGENOM" id="CLU_062828_3_1_1"/>
<dbReference type="InParanoid" id="Q9BTM1"/>
<dbReference type="OMA" id="HNSETHE"/>
<dbReference type="OrthoDB" id="9477400at2759"/>
<dbReference type="PAN-GO" id="Q9BTM1">
    <property type="GO annotations" value="1 GO annotation based on evolutionary models"/>
</dbReference>
<dbReference type="PhylomeDB" id="Q9BTM1"/>
<dbReference type="TreeFam" id="TF300137"/>
<dbReference type="PathwayCommons" id="Q9BTM1"/>
<dbReference type="Reactome" id="R-HSA-110328">
    <property type="pathway name" value="Recognition and association of DNA glycosylase with site containing an affected pyrimidine"/>
</dbReference>
<dbReference type="Reactome" id="R-HSA-110329">
    <property type="pathway name" value="Cleavage of the damaged pyrimidine"/>
</dbReference>
<dbReference type="Reactome" id="R-HSA-110330">
    <property type="pathway name" value="Recognition and association of DNA glycosylase with site containing an affected purine"/>
</dbReference>
<dbReference type="Reactome" id="R-HSA-110331">
    <property type="pathway name" value="Cleavage of the damaged purine"/>
</dbReference>
<dbReference type="Reactome" id="R-HSA-1221632">
    <property type="pathway name" value="Meiotic synapsis"/>
</dbReference>
<dbReference type="Reactome" id="R-HSA-171306">
    <property type="pathway name" value="Packaging Of Telomere Ends"/>
</dbReference>
<dbReference type="Reactome" id="R-HSA-1912408">
    <property type="pathway name" value="Pre-NOTCH Transcription and Translation"/>
</dbReference>
<dbReference type="Reactome" id="R-HSA-201722">
    <property type="pathway name" value="Formation of the beta-catenin:TCF transactivating complex"/>
</dbReference>
<dbReference type="Reactome" id="R-HSA-212300">
    <property type="pathway name" value="PRC2 methylates histones and DNA"/>
</dbReference>
<dbReference type="Reactome" id="R-HSA-2299718">
    <property type="pathway name" value="Condensation of Prophase Chromosomes"/>
</dbReference>
<dbReference type="Reactome" id="R-HSA-2559580">
    <property type="pathway name" value="Oxidative Stress Induced Senescence"/>
</dbReference>
<dbReference type="Reactome" id="R-HSA-2559582">
    <property type="pathway name" value="Senescence-Associated Secretory Phenotype (SASP)"/>
</dbReference>
<dbReference type="Reactome" id="R-HSA-2559586">
    <property type="pathway name" value="DNA Damage/Telomere Stress Induced Senescence"/>
</dbReference>
<dbReference type="Reactome" id="R-HSA-3214858">
    <property type="pathway name" value="RMTs methylate histone arginines"/>
</dbReference>
<dbReference type="Reactome" id="R-HSA-427359">
    <property type="pathway name" value="SIRT1 negatively regulates rRNA expression"/>
</dbReference>
<dbReference type="Reactome" id="R-HSA-427389">
    <property type="pathway name" value="ERCC6 (CSB) and EHMT2 (G9a) positively regulate rRNA expression"/>
</dbReference>
<dbReference type="Reactome" id="R-HSA-427413">
    <property type="pathway name" value="NoRC negatively regulates rRNA expression"/>
</dbReference>
<dbReference type="Reactome" id="R-HSA-5250924">
    <property type="pathway name" value="B-WICH complex positively regulates rRNA expression"/>
</dbReference>
<dbReference type="Reactome" id="R-HSA-5334118">
    <property type="pathway name" value="DNA methylation"/>
</dbReference>
<dbReference type="Reactome" id="R-HSA-5578749">
    <property type="pathway name" value="Transcriptional regulation by small RNAs"/>
</dbReference>
<dbReference type="Reactome" id="R-HSA-5617472">
    <property type="pathway name" value="Activation of anterior HOX genes in hindbrain development during early embryogenesis"/>
</dbReference>
<dbReference type="Reactome" id="R-HSA-5625886">
    <property type="pathway name" value="Activated PKN1 stimulates transcription of AR (androgen receptor) regulated genes KLK2 and KLK3"/>
</dbReference>
<dbReference type="Reactome" id="R-HSA-606279">
    <property type="pathway name" value="Deposition of new CENPA-containing nucleosomes at the centromere"/>
</dbReference>
<dbReference type="Reactome" id="R-HSA-68616">
    <property type="pathway name" value="Assembly of the ORC complex at the origin of replication"/>
</dbReference>
<dbReference type="Reactome" id="R-HSA-73728">
    <property type="pathway name" value="RNA Polymerase I Promoter Opening"/>
</dbReference>
<dbReference type="Reactome" id="R-HSA-73772">
    <property type="pathway name" value="RNA Polymerase I Promoter Escape"/>
</dbReference>
<dbReference type="Reactome" id="R-HSA-8936459">
    <property type="pathway name" value="RUNX1 regulates genes involved in megakaryocyte differentiation and platelet function"/>
</dbReference>
<dbReference type="Reactome" id="R-HSA-8939236">
    <property type="pathway name" value="RUNX1 regulates transcription of genes involved in differentiation of HSCs"/>
</dbReference>
<dbReference type="Reactome" id="R-HSA-9018519">
    <property type="pathway name" value="Estrogen-dependent gene expression"/>
</dbReference>
<dbReference type="Reactome" id="R-HSA-912446">
    <property type="pathway name" value="Meiotic recombination"/>
</dbReference>
<dbReference type="Reactome" id="R-HSA-9616222">
    <property type="pathway name" value="Transcriptional regulation of granulopoiesis"/>
</dbReference>
<dbReference type="Reactome" id="R-HSA-9670095">
    <property type="pathway name" value="Inhibition of DNA recombination at telomere"/>
</dbReference>
<dbReference type="Reactome" id="R-HSA-9710421">
    <property type="pathway name" value="Defective pyroptosis"/>
</dbReference>
<dbReference type="Reactome" id="R-HSA-9821002">
    <property type="pathway name" value="Chromatin modifications during the maternal to zygotic transition (MZT)"/>
</dbReference>
<dbReference type="Reactome" id="R-HSA-9841922">
    <property type="pathway name" value="MLL4 and MLL3 complexes regulate expression of PPARG target genes in adipogenesis and hepatic steatosis"/>
</dbReference>
<dbReference type="Reactome" id="R-HSA-9843940">
    <property type="pathway name" value="Regulation of endogenous retroelements by KRAB-ZFP proteins"/>
</dbReference>
<dbReference type="Reactome" id="R-HSA-9843970">
    <property type="pathway name" value="Regulation of endogenous retroelements by the Human Silencing Hub (HUSH) complex"/>
</dbReference>
<dbReference type="Reactome" id="R-HSA-9845323">
    <property type="pathway name" value="Regulation of endogenous retroelements by Piwi-interacting RNAs (piRNAs)"/>
</dbReference>
<dbReference type="SignaLink" id="Q9BTM1"/>
<dbReference type="SIGNOR" id="Q9BTM1"/>
<dbReference type="BioGRID-ORCS" id="55766">
    <property type="hits" value="204 hits in 1140 CRISPR screens"/>
</dbReference>
<dbReference type="CD-CODE" id="91857CE7">
    <property type="entry name" value="Nucleolus"/>
</dbReference>
<dbReference type="EvolutionaryTrace" id="Q9BTM1"/>
<dbReference type="GeneWiki" id="H2AFJ"/>
<dbReference type="GenomeRNAi" id="55766"/>
<dbReference type="Pharos" id="Q9BTM1">
    <property type="development level" value="Tbio"/>
</dbReference>
<dbReference type="PRO" id="PR:Q9BTM1"/>
<dbReference type="Proteomes" id="UP000005640">
    <property type="component" value="Chromosome 12"/>
</dbReference>
<dbReference type="RNAct" id="Q9BTM1">
    <property type="molecule type" value="protein"/>
</dbReference>
<dbReference type="Bgee" id="ENSG00000246705">
    <property type="expression patterns" value="Expressed in left testis and 181 other cell types or tissues"/>
</dbReference>
<dbReference type="ExpressionAtlas" id="Q9BTM1">
    <property type="expression patterns" value="baseline and differential"/>
</dbReference>
<dbReference type="GO" id="GO:0070062">
    <property type="term" value="C:extracellular exosome"/>
    <property type="evidence" value="ECO:0007005"/>
    <property type="project" value="UniProtKB"/>
</dbReference>
<dbReference type="GO" id="GO:0000786">
    <property type="term" value="C:nucleosome"/>
    <property type="evidence" value="ECO:0000318"/>
    <property type="project" value="GO_Central"/>
</dbReference>
<dbReference type="GO" id="GO:0005634">
    <property type="term" value="C:nucleus"/>
    <property type="evidence" value="ECO:0000318"/>
    <property type="project" value="GO_Central"/>
</dbReference>
<dbReference type="GO" id="GO:0003677">
    <property type="term" value="F:DNA binding"/>
    <property type="evidence" value="ECO:0007669"/>
    <property type="project" value="UniProtKB-KW"/>
</dbReference>
<dbReference type="GO" id="GO:0046982">
    <property type="term" value="F:protein heterodimerization activity"/>
    <property type="evidence" value="ECO:0007669"/>
    <property type="project" value="InterPro"/>
</dbReference>
<dbReference type="GO" id="GO:0030527">
    <property type="term" value="F:structural constituent of chromatin"/>
    <property type="evidence" value="ECO:0000318"/>
    <property type="project" value="GO_Central"/>
</dbReference>
<dbReference type="GO" id="GO:0031507">
    <property type="term" value="P:heterochromatin formation"/>
    <property type="evidence" value="ECO:0000318"/>
    <property type="project" value="GO_Central"/>
</dbReference>
<dbReference type="CDD" id="cd00074">
    <property type="entry name" value="HFD_H2A"/>
    <property type="match status" value="1"/>
</dbReference>
<dbReference type="FunFam" id="1.10.20.10:FF:000004">
    <property type="entry name" value="Histone H2A"/>
    <property type="match status" value="1"/>
</dbReference>
<dbReference type="Gene3D" id="1.10.20.10">
    <property type="entry name" value="Histone, subunit A"/>
    <property type="match status" value="1"/>
</dbReference>
<dbReference type="InterPro" id="IPR009072">
    <property type="entry name" value="Histone-fold"/>
</dbReference>
<dbReference type="InterPro" id="IPR002119">
    <property type="entry name" value="Histone_H2A"/>
</dbReference>
<dbReference type="InterPro" id="IPR007125">
    <property type="entry name" value="Histone_H2A/H2B/H3"/>
</dbReference>
<dbReference type="InterPro" id="IPR032454">
    <property type="entry name" value="Histone_H2A_C"/>
</dbReference>
<dbReference type="InterPro" id="IPR032458">
    <property type="entry name" value="Histone_H2A_CS"/>
</dbReference>
<dbReference type="PANTHER" id="PTHR23430">
    <property type="entry name" value="HISTONE H2A"/>
    <property type="match status" value="1"/>
</dbReference>
<dbReference type="Pfam" id="PF00125">
    <property type="entry name" value="Histone"/>
    <property type="match status" value="1"/>
</dbReference>
<dbReference type="Pfam" id="PF16211">
    <property type="entry name" value="Histone_H2A_C"/>
    <property type="match status" value="1"/>
</dbReference>
<dbReference type="PRINTS" id="PR00620">
    <property type="entry name" value="HISTONEH2A"/>
</dbReference>
<dbReference type="SMART" id="SM00414">
    <property type="entry name" value="H2A"/>
    <property type="match status" value="1"/>
</dbReference>
<dbReference type="SUPFAM" id="SSF47113">
    <property type="entry name" value="Histone-fold"/>
    <property type="match status" value="1"/>
</dbReference>
<dbReference type="PROSITE" id="PS00046">
    <property type="entry name" value="HISTONE_H2A"/>
    <property type="match status" value="1"/>
</dbReference>
<gene>
    <name evidence="7" type="primary">H2AJ</name>
    <name evidence="7" type="synonym">H2AFJ</name>
</gene>
<keyword id="KW-0002">3D-structure</keyword>
<keyword id="KW-0007">Acetylation</keyword>
<keyword id="KW-0025">Alternative splicing</keyword>
<keyword id="KW-0158">Chromosome</keyword>
<keyword id="KW-0238">DNA-binding</keyword>
<keyword id="KW-1017">Isopeptide bond</keyword>
<keyword id="KW-0488">Methylation</keyword>
<keyword id="KW-0544">Nucleosome core</keyword>
<keyword id="KW-0539">Nucleus</keyword>
<keyword id="KW-0597">Phosphoprotein</keyword>
<keyword id="KW-1267">Proteomics identification</keyword>
<keyword id="KW-1185">Reference proteome</keyword>
<keyword id="KW-0832">Ubl conjugation</keyword>